<protein>
    <recommendedName>
        <fullName evidence="1">Inosine-5'-monophosphate dehydrogenase</fullName>
        <shortName evidence="1">IMP dehydrogenase</shortName>
        <shortName evidence="1">IMPD</shortName>
        <shortName evidence="1">IMPDH</shortName>
        <ecNumber evidence="1">1.1.1.205</ecNumber>
    </recommendedName>
</protein>
<comment type="function">
    <text evidence="1 2">Catalyzes the conversion of inosine 5'-phosphate (IMP) to xanthosine 5'-phosphate (XMP), the first committed and rate-limiting step in the de novo synthesis of guanine nucleotides, and therefore plays an important role in the regulation of cell growth.</text>
</comment>
<comment type="catalytic activity">
    <reaction evidence="1">
        <text>IMP + NAD(+) + H2O = XMP + NADH + H(+)</text>
        <dbReference type="Rhea" id="RHEA:11708"/>
        <dbReference type="ChEBI" id="CHEBI:15377"/>
        <dbReference type="ChEBI" id="CHEBI:15378"/>
        <dbReference type="ChEBI" id="CHEBI:57464"/>
        <dbReference type="ChEBI" id="CHEBI:57540"/>
        <dbReference type="ChEBI" id="CHEBI:57945"/>
        <dbReference type="ChEBI" id="CHEBI:58053"/>
        <dbReference type="EC" id="1.1.1.205"/>
    </reaction>
</comment>
<comment type="cofactor">
    <cofactor evidence="1">
        <name>K(+)</name>
        <dbReference type="ChEBI" id="CHEBI:29103"/>
    </cofactor>
</comment>
<comment type="activity regulation">
    <text evidence="1">Mycophenolic acid (MPA) is a non-competitive inhibitor that prevents formation of the closed enzyme conformation by binding to the same site as the amobile flap. In contrast, mizoribine monophosphate (MZP) is a competitive inhibitor that induces the closed conformation. MPA is a potent inhibitor of mammalian IMPDHs but a poor inhibitor of the bacterial enzymes. MZP is a more potent inhibitor of bacterial IMPDH.</text>
</comment>
<comment type="biophysicochemical properties">
    <kinetics>
        <KM evidence="2">9.1 uM for Inosine 5'-phosphate</KM>
        <KM evidence="2">18 uM for NAD(+)</KM>
        <KM evidence="2">1.6 mM for K(+)</KM>
    </kinetics>
</comment>
<comment type="pathway">
    <text evidence="1">Purine metabolism; XMP biosynthesis via de novo pathway; XMP from IMP: step 1/1.</text>
</comment>
<comment type="subunit">
    <text evidence="1 2">Homotetramer.</text>
</comment>
<comment type="subcellular location">
    <subcellularLocation>
        <location evidence="1">Cytoplasm</location>
    </subcellularLocation>
</comment>
<comment type="similarity">
    <text evidence="1">Belongs to the IMPDH/GMPR family.</text>
</comment>
<evidence type="ECO:0000255" key="1">
    <source>
        <dbReference type="HAMAP-Rule" id="MF_03156"/>
    </source>
</evidence>
<evidence type="ECO:0000269" key="2">
    <source>
    </source>
</evidence>
<accession>Q84XA3</accession>
<name>IMDH_VIGUN</name>
<proteinExistence type="evidence at protein level"/>
<keyword id="KW-0129">CBS domain</keyword>
<keyword id="KW-0963">Cytoplasm</keyword>
<keyword id="KW-0332">GMP biosynthesis</keyword>
<keyword id="KW-0479">Metal-binding</keyword>
<keyword id="KW-0520">NAD</keyword>
<keyword id="KW-0560">Oxidoreductase</keyword>
<keyword id="KW-0630">Potassium</keyword>
<keyword id="KW-0658">Purine biosynthesis</keyword>
<reference key="1">
    <citation type="submission" date="2002-12" db="EMBL/GenBank/DDBJ databases">
        <title>Vuimpdh mRNA from cowpea encoding inosine monophosphate dehydrogenase.</title>
        <authorList>
            <person name="Mann A.J."/>
            <person name="Smith P.M.C."/>
            <person name="Bussell J.D."/>
        </authorList>
    </citation>
    <scope>NUCLEOTIDE SEQUENCE [MRNA]</scope>
    <source>
        <tissue>Root nodule</tissue>
    </source>
</reference>
<reference key="2">
    <citation type="journal article" date="1985" name="Arch. Biochem. Biophys.">
        <title>Purification and properties of inosine monophosphate oxidoreductase from nitrogen-fixing nodules of cowpea (Vigna unguiculata L. Walp).</title>
        <authorList>
            <person name="Atkins C.A."/>
            <person name="Shelp B.J."/>
            <person name="Storer P.J."/>
        </authorList>
    </citation>
    <scope>FUNCTION</scope>
    <scope>BIOPHYSICOCHEMICAL PROPERTIES</scope>
    <scope>SUBUNIT</scope>
</reference>
<organism>
    <name type="scientific">Vigna unguiculata</name>
    <name type="common">Cowpea</name>
    <dbReference type="NCBI Taxonomy" id="3917"/>
    <lineage>
        <taxon>Eukaryota</taxon>
        <taxon>Viridiplantae</taxon>
        <taxon>Streptophyta</taxon>
        <taxon>Embryophyta</taxon>
        <taxon>Tracheophyta</taxon>
        <taxon>Spermatophyta</taxon>
        <taxon>Magnoliopsida</taxon>
        <taxon>eudicotyledons</taxon>
        <taxon>Gunneridae</taxon>
        <taxon>Pentapetalae</taxon>
        <taxon>rosids</taxon>
        <taxon>fabids</taxon>
        <taxon>Fabales</taxon>
        <taxon>Fabaceae</taxon>
        <taxon>Papilionoideae</taxon>
        <taxon>50 kb inversion clade</taxon>
        <taxon>NPAAA clade</taxon>
        <taxon>indigoferoid/millettioid clade</taxon>
        <taxon>Phaseoleae</taxon>
        <taxon>Vigna</taxon>
    </lineage>
</organism>
<sequence>MDFTPPPIEDGFTAEKLFSQGFSYTYDDVIFLPHYIDFAADAVDLSTRLTRRLPLAVPLVASPMDTVSESAMASAMASLGGIAIVHSNVPAAAQASLVRAAKSRRVPILSEPAFAAPSAVIEHEDDFAASPFLLVTDIGAAGGKLLGYVAKRDWTNQKDKSLRVGDYMAPPPRRAPWNADLNKIHEIMENEKSGAVALERDGEVVDLVVREEVERVKGYPKLAAPATVGPDGEFMVGAAMGTREDDKERLKHLVKAGVNVVVLDSSQGNSIYQLEMVKYVKSVYPELDVIGGNVVTMYQAENLIQAGVDGLRVGMGSGSICTTQEVCAVGRGQATAVYKVSSIAYKSGVPVIADGGISNSGHIVKALSLGASTAMMGSFLAGSHEAPGAYVYQNGQRVKKYRGMGSLEAMTKGSDARYLGDTAKLKIAQGVVGAVKDKGSVLNFIPYTLQAVRQGFQDIGASSLQSAHDLLRSRVLRLEVRTGAAQVEGGVHGLVSYEKKYY</sequence>
<gene>
    <name type="primary">impdh</name>
</gene>
<feature type="chain" id="PRO_0000415681" description="Inosine-5'-monophosphate dehydrogenase">
    <location>
        <begin position="1"/>
        <end position="502"/>
    </location>
</feature>
<feature type="domain" description="CBS" evidence="1">
    <location>
        <begin position="168"/>
        <end position="224"/>
    </location>
</feature>
<feature type="active site" description="Thioimidate intermediate" evidence="1">
    <location>
        <position position="321"/>
    </location>
</feature>
<feature type="active site" description="Proton acceptor" evidence="1">
    <location>
        <position position="417"/>
    </location>
</feature>
<feature type="binding site" evidence="1">
    <location>
        <begin position="264"/>
        <end position="266"/>
    </location>
    <ligand>
        <name>NAD(+)</name>
        <dbReference type="ChEBI" id="CHEBI:57540"/>
    </ligand>
</feature>
<feature type="binding site" evidence="1">
    <location>
        <begin position="314"/>
        <end position="316"/>
    </location>
    <ligand>
        <name>NAD(+)</name>
        <dbReference type="ChEBI" id="CHEBI:57540"/>
    </ligand>
</feature>
<feature type="binding site" description="in other chain" evidence="1">
    <location>
        <position position="316"/>
    </location>
    <ligand>
        <name>K(+)</name>
        <dbReference type="ChEBI" id="CHEBI:29103"/>
        <note>ligand shared between two tetrameric partners</note>
    </ligand>
</feature>
<feature type="binding site" description="in other chain" evidence="1">
    <location>
        <position position="318"/>
    </location>
    <ligand>
        <name>K(+)</name>
        <dbReference type="ChEBI" id="CHEBI:29103"/>
        <note>ligand shared between two tetrameric partners</note>
    </ligand>
</feature>
<feature type="binding site" evidence="1">
    <location>
        <position position="319"/>
    </location>
    <ligand>
        <name>IMP</name>
        <dbReference type="ChEBI" id="CHEBI:58053"/>
    </ligand>
</feature>
<feature type="binding site" description="in other chain" evidence="1">
    <location>
        <position position="321"/>
    </location>
    <ligand>
        <name>K(+)</name>
        <dbReference type="ChEBI" id="CHEBI:29103"/>
        <note>ligand shared between two tetrameric partners</note>
    </ligand>
</feature>
<feature type="binding site" evidence="1">
    <location>
        <begin position="354"/>
        <end position="356"/>
    </location>
    <ligand>
        <name>IMP</name>
        <dbReference type="ChEBI" id="CHEBI:58053"/>
    </ligand>
</feature>
<feature type="binding site" evidence="1">
    <location>
        <begin position="377"/>
        <end position="378"/>
    </location>
    <ligand>
        <name>IMP</name>
        <dbReference type="ChEBI" id="CHEBI:58053"/>
    </ligand>
</feature>
<feature type="binding site" evidence="1">
    <location>
        <begin position="401"/>
        <end position="405"/>
    </location>
    <ligand>
        <name>IMP</name>
        <dbReference type="ChEBI" id="CHEBI:58053"/>
    </ligand>
</feature>
<feature type="binding site" evidence="1">
    <location>
        <position position="429"/>
    </location>
    <ligand>
        <name>IMP</name>
        <dbReference type="ChEBI" id="CHEBI:58053"/>
    </ligand>
</feature>
<feature type="binding site" evidence="1">
    <location>
        <position position="488"/>
    </location>
    <ligand>
        <name>K(+)</name>
        <dbReference type="ChEBI" id="CHEBI:29103"/>
        <note>ligand shared between two tetrameric partners</note>
    </ligand>
</feature>
<feature type="binding site" evidence="1">
    <location>
        <position position="489"/>
    </location>
    <ligand>
        <name>K(+)</name>
        <dbReference type="ChEBI" id="CHEBI:29103"/>
        <note>ligand shared between two tetrameric partners</note>
    </ligand>
</feature>
<feature type="binding site" evidence="1">
    <location>
        <position position="490"/>
    </location>
    <ligand>
        <name>K(+)</name>
        <dbReference type="ChEBI" id="CHEBI:29103"/>
        <note>ligand shared between two tetrameric partners</note>
    </ligand>
</feature>
<dbReference type="EC" id="1.1.1.205" evidence="1"/>
<dbReference type="EMBL" id="AY193837">
    <property type="protein sequence ID" value="AAO40253.1"/>
    <property type="molecule type" value="mRNA"/>
</dbReference>
<dbReference type="SMR" id="Q84XA3"/>
<dbReference type="EnsemblPlants" id="Vigun01g055700.1.v1.2">
    <property type="protein sequence ID" value="Vigun01g055700.1.v1.2"/>
    <property type="gene ID" value="Vigun01g055700.v1.2"/>
</dbReference>
<dbReference type="Gramene" id="Vigun01g055700.1.v1.2">
    <property type="protein sequence ID" value="Vigun01g055700.1.v1.2"/>
    <property type="gene ID" value="Vigun01g055700.v1.2"/>
</dbReference>
<dbReference type="OrthoDB" id="416622at2759"/>
<dbReference type="SABIO-RK" id="Q84XA3"/>
<dbReference type="UniPathway" id="UPA00601">
    <property type="reaction ID" value="UER00295"/>
</dbReference>
<dbReference type="GO" id="GO:0005737">
    <property type="term" value="C:cytoplasm"/>
    <property type="evidence" value="ECO:0007669"/>
    <property type="project" value="UniProtKB-SubCell"/>
</dbReference>
<dbReference type="GO" id="GO:0003938">
    <property type="term" value="F:IMP dehydrogenase activity"/>
    <property type="evidence" value="ECO:0007669"/>
    <property type="project" value="UniProtKB-UniRule"/>
</dbReference>
<dbReference type="GO" id="GO:0046872">
    <property type="term" value="F:metal ion binding"/>
    <property type="evidence" value="ECO:0007669"/>
    <property type="project" value="UniProtKB-UniRule"/>
</dbReference>
<dbReference type="GO" id="GO:0000166">
    <property type="term" value="F:nucleotide binding"/>
    <property type="evidence" value="ECO:0007669"/>
    <property type="project" value="UniProtKB-UniRule"/>
</dbReference>
<dbReference type="GO" id="GO:0006177">
    <property type="term" value="P:GMP biosynthetic process"/>
    <property type="evidence" value="ECO:0007669"/>
    <property type="project" value="UniProtKB-UniRule"/>
</dbReference>
<dbReference type="GO" id="GO:0006183">
    <property type="term" value="P:GTP biosynthetic process"/>
    <property type="evidence" value="ECO:0007669"/>
    <property type="project" value="TreeGrafter"/>
</dbReference>
<dbReference type="CDD" id="cd04601">
    <property type="entry name" value="CBS_pair_IMPDH"/>
    <property type="match status" value="1"/>
</dbReference>
<dbReference type="CDD" id="cd00381">
    <property type="entry name" value="IMPDH"/>
    <property type="match status" value="1"/>
</dbReference>
<dbReference type="FunFam" id="3.20.20.70:FF:000086">
    <property type="entry name" value="IMP dehydrogenase, putative"/>
    <property type="match status" value="1"/>
</dbReference>
<dbReference type="Gene3D" id="3.20.20.70">
    <property type="entry name" value="Aldolase class I"/>
    <property type="match status" value="1"/>
</dbReference>
<dbReference type="HAMAP" id="MF_01964">
    <property type="entry name" value="IMPDH"/>
    <property type="match status" value="1"/>
</dbReference>
<dbReference type="InterPro" id="IPR013785">
    <property type="entry name" value="Aldolase_TIM"/>
</dbReference>
<dbReference type="InterPro" id="IPR046342">
    <property type="entry name" value="CBS_dom_sf"/>
</dbReference>
<dbReference type="InterPro" id="IPR005990">
    <property type="entry name" value="IMP_DH"/>
</dbReference>
<dbReference type="InterPro" id="IPR015875">
    <property type="entry name" value="IMP_DH/GMP_Rdtase_CS"/>
</dbReference>
<dbReference type="InterPro" id="IPR001093">
    <property type="entry name" value="IMP_DH_GMPRt"/>
</dbReference>
<dbReference type="NCBIfam" id="TIGR01302">
    <property type="entry name" value="IMP_dehydrog"/>
    <property type="match status" value="1"/>
</dbReference>
<dbReference type="PANTHER" id="PTHR11911:SF111">
    <property type="entry name" value="INOSINE-5'-MONOPHOSPHATE DEHYDROGENASE"/>
    <property type="match status" value="1"/>
</dbReference>
<dbReference type="PANTHER" id="PTHR11911">
    <property type="entry name" value="INOSINE-5-MONOPHOSPHATE DEHYDROGENASE RELATED"/>
    <property type="match status" value="1"/>
</dbReference>
<dbReference type="Pfam" id="PF00478">
    <property type="entry name" value="IMPDH"/>
    <property type="match status" value="1"/>
</dbReference>
<dbReference type="PIRSF" id="PIRSF000130">
    <property type="entry name" value="IMPDH"/>
    <property type="match status" value="1"/>
</dbReference>
<dbReference type="SMART" id="SM01240">
    <property type="entry name" value="IMPDH"/>
    <property type="match status" value="1"/>
</dbReference>
<dbReference type="SUPFAM" id="SSF54631">
    <property type="entry name" value="CBS-domain pair"/>
    <property type="match status" value="1"/>
</dbReference>
<dbReference type="SUPFAM" id="SSF51412">
    <property type="entry name" value="Inosine monophosphate dehydrogenase (IMPDH)"/>
    <property type="match status" value="1"/>
</dbReference>
<dbReference type="PROSITE" id="PS00487">
    <property type="entry name" value="IMP_DH_GMP_RED"/>
    <property type="match status" value="1"/>
</dbReference>